<feature type="chain" id="PRO_1000137223" description="Putative ion-transport protein YfeO">
    <location>
        <begin position="1"/>
        <end position="418"/>
    </location>
</feature>
<feature type="transmembrane region" description="Helical" evidence="1">
    <location>
        <begin position="10"/>
        <end position="30"/>
    </location>
</feature>
<feature type="transmembrane region" description="Helical" evidence="1">
    <location>
        <begin position="54"/>
        <end position="74"/>
    </location>
</feature>
<feature type="transmembrane region" description="Helical" evidence="1">
    <location>
        <begin position="99"/>
        <end position="119"/>
    </location>
</feature>
<feature type="transmembrane region" description="Helical" evidence="1">
    <location>
        <begin position="120"/>
        <end position="140"/>
    </location>
</feature>
<feature type="transmembrane region" description="Helical" evidence="1">
    <location>
        <begin position="149"/>
        <end position="169"/>
    </location>
</feature>
<feature type="transmembrane region" description="Helical" evidence="1">
    <location>
        <begin position="186"/>
        <end position="206"/>
    </location>
</feature>
<feature type="transmembrane region" description="Helical" evidence="1">
    <location>
        <begin position="223"/>
        <end position="243"/>
    </location>
</feature>
<feature type="transmembrane region" description="Helical" evidence="1">
    <location>
        <begin position="258"/>
        <end position="278"/>
    </location>
</feature>
<feature type="transmembrane region" description="Helical" evidence="1">
    <location>
        <begin position="300"/>
        <end position="320"/>
    </location>
</feature>
<feature type="transmembrane region" description="Helical" evidence="1">
    <location>
        <begin position="322"/>
        <end position="342"/>
    </location>
</feature>
<feature type="transmembrane region" description="Helical" evidence="1">
    <location>
        <begin position="343"/>
        <end position="363"/>
    </location>
</feature>
<feature type="transmembrane region" description="Helical" evidence="1">
    <location>
        <begin position="371"/>
        <end position="391"/>
    </location>
</feature>
<organism>
    <name type="scientific">Shigella boydii serotype 18 (strain CDC 3083-94 / BS512)</name>
    <dbReference type="NCBI Taxonomy" id="344609"/>
    <lineage>
        <taxon>Bacteria</taxon>
        <taxon>Pseudomonadati</taxon>
        <taxon>Pseudomonadota</taxon>
        <taxon>Gammaproteobacteria</taxon>
        <taxon>Enterobacterales</taxon>
        <taxon>Enterobacteriaceae</taxon>
        <taxon>Shigella</taxon>
    </lineage>
</organism>
<gene>
    <name evidence="1" type="primary">yfeO</name>
    <name type="ordered locus">SbBS512_E2758</name>
</gene>
<evidence type="ECO:0000255" key="1">
    <source>
        <dbReference type="HAMAP-Rule" id="MF_01115"/>
    </source>
</evidence>
<comment type="subcellular location">
    <subcellularLocation>
        <location evidence="1">Cell membrane</location>
        <topology evidence="1">Multi-pass membrane protein</topology>
    </subcellularLocation>
</comment>
<comment type="similarity">
    <text evidence="1">Belongs to the chloride channel (TC 2.A.49) family.</text>
</comment>
<reference key="1">
    <citation type="submission" date="2008-05" db="EMBL/GenBank/DDBJ databases">
        <title>Complete sequence of Shigella boydii serotype 18 strain BS512.</title>
        <authorList>
            <person name="Rasko D.A."/>
            <person name="Rosovitz M."/>
            <person name="Maurelli A.T."/>
            <person name="Myers G."/>
            <person name="Seshadri R."/>
            <person name="Cer R."/>
            <person name="Jiang L."/>
            <person name="Ravel J."/>
            <person name="Sebastian Y."/>
        </authorList>
    </citation>
    <scope>NUCLEOTIDE SEQUENCE [LARGE SCALE GENOMIC DNA]</scope>
    <source>
        <strain>CDC 3083-94 / BS512</strain>
    </source>
</reference>
<accession>B2TWY6</accession>
<proteinExistence type="inferred from homology"/>
<dbReference type="EMBL" id="CP001063">
    <property type="protein sequence ID" value="ACD06895.1"/>
    <property type="molecule type" value="Genomic_DNA"/>
</dbReference>
<dbReference type="RefSeq" id="WP_000903152.1">
    <property type="nucleotide sequence ID" value="NC_010658.1"/>
</dbReference>
<dbReference type="SMR" id="B2TWY6"/>
<dbReference type="STRING" id="344609.SbBS512_E2758"/>
<dbReference type="KEGG" id="sbc:SbBS512_E2758"/>
<dbReference type="HOGENOM" id="CLU_053130_0_0_6"/>
<dbReference type="Proteomes" id="UP000001030">
    <property type="component" value="Chromosome"/>
</dbReference>
<dbReference type="GO" id="GO:0005886">
    <property type="term" value="C:plasma membrane"/>
    <property type="evidence" value="ECO:0007669"/>
    <property type="project" value="UniProtKB-SubCell"/>
</dbReference>
<dbReference type="GO" id="GO:0015108">
    <property type="term" value="F:chloride transmembrane transporter activity"/>
    <property type="evidence" value="ECO:0007669"/>
    <property type="project" value="InterPro"/>
</dbReference>
<dbReference type="GO" id="GO:0005216">
    <property type="term" value="F:monoatomic ion channel activity"/>
    <property type="evidence" value="ECO:0007669"/>
    <property type="project" value="UniProtKB-UniRule"/>
</dbReference>
<dbReference type="CDD" id="cd00400">
    <property type="entry name" value="Voltage_gated_ClC"/>
    <property type="match status" value="1"/>
</dbReference>
<dbReference type="FunFam" id="1.10.3080.10:FF:000007">
    <property type="entry name" value="Putative ion-transport protein YfeO"/>
    <property type="match status" value="1"/>
</dbReference>
<dbReference type="Gene3D" id="1.10.3080.10">
    <property type="entry name" value="Clc chloride channel"/>
    <property type="match status" value="1"/>
</dbReference>
<dbReference type="HAMAP" id="MF_01115">
    <property type="entry name" value="CLC_YfeO"/>
    <property type="match status" value="1"/>
</dbReference>
<dbReference type="InterPro" id="IPR022969">
    <property type="entry name" value="Chloride_channel_YfeO"/>
</dbReference>
<dbReference type="InterPro" id="IPR014743">
    <property type="entry name" value="Cl-channel_core"/>
</dbReference>
<dbReference type="InterPro" id="IPR001807">
    <property type="entry name" value="ClC"/>
</dbReference>
<dbReference type="InterPro" id="IPR050368">
    <property type="entry name" value="ClC-type_chloride_channel"/>
</dbReference>
<dbReference type="NCBIfam" id="NF002971">
    <property type="entry name" value="PRK03655.1"/>
    <property type="match status" value="1"/>
</dbReference>
<dbReference type="PANTHER" id="PTHR43427">
    <property type="entry name" value="CHLORIDE CHANNEL PROTEIN CLC-E"/>
    <property type="match status" value="1"/>
</dbReference>
<dbReference type="PANTHER" id="PTHR43427:SF9">
    <property type="entry name" value="ION-TRANSPORT PROTEIN YFEO-RELATED"/>
    <property type="match status" value="1"/>
</dbReference>
<dbReference type="Pfam" id="PF00654">
    <property type="entry name" value="Voltage_CLC"/>
    <property type="match status" value="1"/>
</dbReference>
<dbReference type="PRINTS" id="PR00762">
    <property type="entry name" value="CLCHANNEL"/>
</dbReference>
<dbReference type="SUPFAM" id="SSF81340">
    <property type="entry name" value="Clc chloride channel"/>
    <property type="match status" value="1"/>
</dbReference>
<protein>
    <recommendedName>
        <fullName evidence="1">Putative ion-transport protein YfeO</fullName>
    </recommendedName>
</protein>
<keyword id="KW-1003">Cell membrane</keyword>
<keyword id="KW-0407">Ion channel</keyword>
<keyword id="KW-0406">Ion transport</keyword>
<keyword id="KW-0472">Membrane</keyword>
<keyword id="KW-1185">Reference proteome</keyword>
<keyword id="KW-0812">Transmembrane</keyword>
<keyword id="KW-1133">Transmembrane helix</keyword>
<keyword id="KW-0813">Transport</keyword>
<sequence>MLHPRARTMLLLSLPAVAIGIASSLILIVVMKIASVLQNLLWQRLPGTLGIAQDSPLWIIGVLTLTGIAVGLVIRFSQGHAGPDPACEPLIGAPVPPSALPGLIVALILGLAGGVSLGPEHPIMTVNIALAVAIGARLLPRVNRMEWTILASAGTIGALFGTPVAAALIFSQTLNGSSEVPLWDRLFAPLMAAAAGALTTGLFFHPHFSLPIAHYGQMEMTDILSGAIVAAIAIAAGMVAVWCLPRLHAMMNQMKNPVLVLGIGGFILGILGVIGGPVSLFKGLDEMQQMVANQAFSTSDYFLLAVIKLAALVVAAASGFRGGRIFPAVFVGVALGLMLHEHVPAVPAAITVSCAILGIVLVVTRDGWLSLFMAAVVVPNTTLLPLLCIVMLPAWLLLAGKPMMMVNRPKQQPPHDNV</sequence>
<name>YFEO_SHIB3</name>